<organism>
    <name type="scientific">Yersinia pestis (strain Pestoides F)</name>
    <dbReference type="NCBI Taxonomy" id="386656"/>
    <lineage>
        <taxon>Bacteria</taxon>
        <taxon>Pseudomonadati</taxon>
        <taxon>Pseudomonadota</taxon>
        <taxon>Gammaproteobacteria</taxon>
        <taxon>Enterobacterales</taxon>
        <taxon>Yersiniaceae</taxon>
        <taxon>Yersinia</taxon>
    </lineage>
</organism>
<sequence>MKRPDYRTLQALDAVIRERGFERAAQKLCITQSAVSQRIKQLENLFGQPLLVRTVPPRPTEQGQKLLALLHQVELLEEEWLGNDNGVDTPLLLSLAVNADSLATWLLPALKPVLADLPIRLNLQVEDETRTQERLRRGEVVGAVSIQPQPLPSCLVDQLGALDYLFVASKAFAERYFPNGVTRSALLKAPAVAFDHLDDMHQAFLQQNFDLSPGSVPCHIVNSSEAFVQLARQGTTCCMIPHLQIEKELASGELIDLTPGLLQRRMLFWHRFAPESRTMRKVTDALLSYGRQVLRQDSFIGQ</sequence>
<feature type="chain" id="PRO_1000060885" description="HTH-type transcriptional regulator ArgP">
    <location>
        <begin position="1"/>
        <end position="302"/>
    </location>
</feature>
<feature type="domain" description="HTH lysR-type" evidence="1">
    <location>
        <begin position="4"/>
        <end position="60"/>
    </location>
</feature>
<feature type="DNA-binding region" description="H-T-H motif" evidence="1">
    <location>
        <begin position="21"/>
        <end position="40"/>
    </location>
</feature>
<dbReference type="EMBL" id="CP000668">
    <property type="protein sequence ID" value="ABP39007.1"/>
    <property type="molecule type" value="Genomic_DNA"/>
</dbReference>
<dbReference type="RefSeq" id="WP_002209958.1">
    <property type="nucleotide sequence ID" value="NZ_CP009715.1"/>
</dbReference>
<dbReference type="SMR" id="A4TI95"/>
<dbReference type="KEGG" id="ypp:YPDSF_0597"/>
<dbReference type="PATRIC" id="fig|386656.14.peg.1916"/>
<dbReference type="GO" id="GO:0003677">
    <property type="term" value="F:DNA binding"/>
    <property type="evidence" value="ECO:0007669"/>
    <property type="project" value="UniProtKB-UniRule"/>
</dbReference>
<dbReference type="GO" id="GO:0003700">
    <property type="term" value="F:DNA-binding transcription factor activity"/>
    <property type="evidence" value="ECO:0007669"/>
    <property type="project" value="UniProtKB-UniRule"/>
</dbReference>
<dbReference type="CDD" id="cd08428">
    <property type="entry name" value="PBP2_IciA_ArgP"/>
    <property type="match status" value="1"/>
</dbReference>
<dbReference type="FunFam" id="1.10.10.10:FF:000061">
    <property type="entry name" value="HTH-type transcriptional regulator ArgP"/>
    <property type="match status" value="1"/>
</dbReference>
<dbReference type="FunFam" id="3.40.190.290:FF:000002">
    <property type="entry name" value="HTH-type transcriptional regulator ArgP"/>
    <property type="match status" value="1"/>
</dbReference>
<dbReference type="Gene3D" id="3.40.190.290">
    <property type="match status" value="1"/>
</dbReference>
<dbReference type="Gene3D" id="1.10.10.10">
    <property type="entry name" value="Winged helix-like DNA-binding domain superfamily/Winged helix DNA-binding domain"/>
    <property type="match status" value="1"/>
</dbReference>
<dbReference type="HAMAP" id="MF_00513">
    <property type="entry name" value="HTH_type_ArgP"/>
    <property type="match status" value="1"/>
</dbReference>
<dbReference type="InterPro" id="IPR017685">
    <property type="entry name" value="ArgP"/>
</dbReference>
<dbReference type="InterPro" id="IPR023490">
    <property type="entry name" value="ArgP_gammaproteobact"/>
</dbReference>
<dbReference type="InterPro" id="IPR050176">
    <property type="entry name" value="LTTR"/>
</dbReference>
<dbReference type="InterPro" id="IPR005119">
    <property type="entry name" value="LysR_subst-bd"/>
</dbReference>
<dbReference type="InterPro" id="IPR000847">
    <property type="entry name" value="Tscrpt_reg_HTH_LysR"/>
</dbReference>
<dbReference type="InterPro" id="IPR036388">
    <property type="entry name" value="WH-like_DNA-bd_sf"/>
</dbReference>
<dbReference type="InterPro" id="IPR036390">
    <property type="entry name" value="WH_DNA-bd_sf"/>
</dbReference>
<dbReference type="NCBIfam" id="TIGR03298">
    <property type="entry name" value="argP"/>
    <property type="match status" value="1"/>
</dbReference>
<dbReference type="NCBIfam" id="NF002964">
    <property type="entry name" value="PRK03635.1"/>
    <property type="match status" value="1"/>
</dbReference>
<dbReference type="NCBIfam" id="NF009888">
    <property type="entry name" value="PRK13348.1"/>
    <property type="match status" value="1"/>
</dbReference>
<dbReference type="PANTHER" id="PTHR30579:SF2">
    <property type="entry name" value="HTH-TYPE TRANSCRIPTIONAL REGULATOR ARGP"/>
    <property type="match status" value="1"/>
</dbReference>
<dbReference type="PANTHER" id="PTHR30579">
    <property type="entry name" value="TRANSCRIPTIONAL REGULATOR"/>
    <property type="match status" value="1"/>
</dbReference>
<dbReference type="Pfam" id="PF00126">
    <property type="entry name" value="HTH_1"/>
    <property type="match status" value="1"/>
</dbReference>
<dbReference type="Pfam" id="PF03466">
    <property type="entry name" value="LysR_substrate"/>
    <property type="match status" value="1"/>
</dbReference>
<dbReference type="PRINTS" id="PR00039">
    <property type="entry name" value="HTHLYSR"/>
</dbReference>
<dbReference type="SUPFAM" id="SSF53850">
    <property type="entry name" value="Periplasmic binding protein-like II"/>
    <property type="match status" value="1"/>
</dbReference>
<dbReference type="SUPFAM" id="SSF46785">
    <property type="entry name" value="Winged helix' DNA-binding domain"/>
    <property type="match status" value="1"/>
</dbReference>
<dbReference type="PROSITE" id="PS50931">
    <property type="entry name" value="HTH_LYSR"/>
    <property type="match status" value="1"/>
</dbReference>
<accession>A4TI95</accession>
<comment type="function">
    <text evidence="1">Controls the transcription of genes involved in arginine and lysine metabolism.</text>
</comment>
<comment type="subunit">
    <text evidence="1">Homodimer.</text>
</comment>
<comment type="similarity">
    <text evidence="2">Belongs to the LysR transcriptional regulatory family.</text>
</comment>
<keyword id="KW-0238">DNA-binding</keyword>
<keyword id="KW-0804">Transcription</keyword>
<keyword id="KW-0805">Transcription regulation</keyword>
<evidence type="ECO:0000255" key="1">
    <source>
        <dbReference type="HAMAP-Rule" id="MF_00513"/>
    </source>
</evidence>
<evidence type="ECO:0000305" key="2"/>
<gene>
    <name evidence="1" type="primary">argP</name>
    <name type="synonym">iciA</name>
    <name type="ordered locus">YPDSF_0597</name>
</gene>
<protein>
    <recommendedName>
        <fullName evidence="1">HTH-type transcriptional regulator ArgP</fullName>
    </recommendedName>
</protein>
<name>ARGP_YERPP</name>
<proteinExistence type="inferred from homology"/>
<reference key="1">
    <citation type="submission" date="2007-02" db="EMBL/GenBank/DDBJ databases">
        <title>Complete sequence of chromosome of Yersinia pestis Pestoides F.</title>
        <authorList>
            <consortium name="US DOE Joint Genome Institute"/>
            <person name="Copeland A."/>
            <person name="Lucas S."/>
            <person name="Lapidus A."/>
            <person name="Barry K."/>
            <person name="Detter J.C."/>
            <person name="Glavina del Rio T."/>
            <person name="Hammon N."/>
            <person name="Israni S."/>
            <person name="Dalin E."/>
            <person name="Tice H."/>
            <person name="Pitluck S."/>
            <person name="Di Bartolo G."/>
            <person name="Chain P."/>
            <person name="Malfatti S."/>
            <person name="Shin M."/>
            <person name="Vergez L."/>
            <person name="Schmutz J."/>
            <person name="Larimer F."/>
            <person name="Land M."/>
            <person name="Hauser L."/>
            <person name="Worsham P."/>
            <person name="Chu M."/>
            <person name="Bearden S."/>
            <person name="Garcia E."/>
            <person name="Richardson P."/>
        </authorList>
    </citation>
    <scope>NUCLEOTIDE SEQUENCE [LARGE SCALE GENOMIC DNA]</scope>
    <source>
        <strain>Pestoides F</strain>
    </source>
</reference>